<protein>
    <recommendedName>
        <fullName evidence="8">Endonuclease V</fullName>
        <ecNumber evidence="5 7">3.2.2.17</ecNumber>
    </recommendedName>
    <alternativeName>
        <fullName>DNA-(apurinic or apyrimidinic site) lyase</fullName>
        <shortName>AP lyase</shortName>
        <ecNumber evidence="5 7">4.2.99.18</ecNumber>
    </alternativeName>
    <alternativeName>
        <fullName evidence="8">T4 pyrimidine dimer glycosylase</fullName>
        <shortName evidence="8">T4-Pdg</shortName>
    </alternativeName>
</protein>
<sequence>MTRINLTLVSELADQHLMAEYRELPRVFGAVRKHVANGKRVRDFKISPTFILGAGHVTFFYDKLEFLRKRQIELIAECLKRGFNIKDTTVQDISDIPQEFRGDYIPHEASIAISQARLDEKIAQRPTWYKYYGKAIYA</sequence>
<keyword id="KW-0002">3D-structure</keyword>
<keyword id="KW-0227">DNA damage</keyword>
<keyword id="KW-0234">DNA repair</keyword>
<keyword id="KW-0255">Endonuclease</keyword>
<keyword id="KW-0326">Glycosidase</keyword>
<keyword id="KW-0378">Hydrolase</keyword>
<keyword id="KW-0456">Lyase</keyword>
<keyword id="KW-0511">Multifunctional enzyme</keyword>
<keyword id="KW-0540">Nuclease</keyword>
<keyword id="KW-1185">Reference proteome</keyword>
<proteinExistence type="evidence at protein level"/>
<name>END5_BPT4</name>
<reference key="1">
    <citation type="journal article" date="1984" name="Nucleic Acids Res.">
        <title>Identification, physical map location and sequence of the denV gene from bacteriophage T4.</title>
        <authorList>
            <person name="Valerie K."/>
            <person name="Henderson E.E."/>
            <person name="Deriel J.K."/>
        </authorList>
    </citation>
    <scope>NUCLEOTIDE SEQUENCE [GENOMIC DNA]</scope>
</reference>
<reference key="2">
    <citation type="journal article" date="1986" name="Nucleic Acids Res.">
        <title>Nucleotide sequence and analysis of the 58.3 to 65.5-kb early region of bacteriophage T4.</title>
        <authorList>
            <person name="Valerie K."/>
            <person name="Stevens J."/>
            <person name="Lynch M."/>
            <person name="Henderson E.E."/>
            <person name="de Riel J.K."/>
        </authorList>
    </citation>
    <scope>NUCLEOTIDE SEQUENCE [GENOMIC DNA]</scope>
</reference>
<reference key="3">
    <citation type="journal article" date="1984" name="J. Virol.">
        <title>Physical mapping and complete nucleotide sequence of the denV gene of bacteriophage T4.</title>
        <authorList>
            <person name="Radany E.H."/>
            <person name="Naumovski L."/>
            <person name="Love J.D."/>
            <person name="Gutekunst K.A."/>
            <person name="Hall D.H."/>
            <person name="Friedberg E.C."/>
        </authorList>
    </citation>
    <scope>NUCLEOTIDE SEQUENCE [GENOMIC DNA]</scope>
</reference>
<reference key="4">
    <citation type="journal article" date="2003" name="Microbiol. Mol. Biol. Rev.">
        <title>Bacteriophage T4 genome.</title>
        <authorList>
            <person name="Miller E.S."/>
            <person name="Kutter E."/>
            <person name="Mosig G."/>
            <person name="Arisaka F."/>
            <person name="Kunisawa T."/>
            <person name="Ruger W."/>
        </authorList>
    </citation>
    <scope>NUCLEOTIDE SEQUENCE [LARGE SCALE GENOMIC DNA]</scope>
</reference>
<reference key="5">
    <citation type="journal article" date="2010" name="Virol. J.">
        <title>Genomes of the T4-related bacteriophages as windows on microbial genome evolution.</title>
        <authorList>
            <person name="Petrov V.M."/>
            <person name="Ratnayaka S."/>
            <person name="Nolan J.M."/>
            <person name="Miller E.S."/>
            <person name="Karam J.D."/>
        </authorList>
    </citation>
    <scope>NUCLEOTIDE SEQUENCE [LARGE SCALE GENOMIC DNA]</scope>
</reference>
<reference key="6">
    <citation type="journal article" date="2015" name="MBio">
        <title>Covalent Modification of Bacteriophage T4 DNA Inhibits CRISPR-Cas9.</title>
        <authorList>
            <person name="Bryson A.L."/>
            <person name="Hwang Y."/>
            <person name="Sherrill-Mix S."/>
            <person name="Wu G.D."/>
            <person name="Lewis J.D."/>
            <person name="Black L."/>
            <person name="Clark T.A."/>
            <person name="Bushman F.D."/>
        </authorList>
    </citation>
    <scope>NUCLEOTIDE SEQUENCE [LARGE SCALE GENOMIC DNA]</scope>
    <source>
        <strain evidence="11">147</strain>
        <strain evidence="12">GT7</strain>
        <strain evidence="10">Wild</strain>
    </source>
</reference>
<reference key="7">
    <citation type="journal article" date="1992" name="Proc. Natl. Acad. Sci. U.S.A.">
        <title>Role of the basic amino acid cluster and Glu-23 in pyrimidine dimer glycosylase activity of T4 endonuclease V.</title>
        <authorList>
            <person name="Doi T."/>
            <person name="Recktenwald A."/>
            <person name="Karaki Y."/>
            <person name="Kikuchi M."/>
            <person name="Morikawa K."/>
            <person name="Ikehara M."/>
            <person name="Inaoka T."/>
            <person name="Hori N."/>
            <person name="Ohtsuka E."/>
        </authorList>
    </citation>
    <scope>MUTAGENESIS OF GLU-11; HIS-16; TYR-21; ARG-22; GLU-23; ARG-26; ARG-40; ARG-42; ARG-68; LYS-86; ASP-87; ARG-117; ASP-119; GLU-120; LYS-121; ARG-125; TYR-129; TYR-132 AND LYS-134</scope>
</reference>
<reference key="8">
    <citation type="journal article" date="1993" name="Biochemistry">
        <title>Evidence for an imino intermediate in the T4 endonuclease V reaction.</title>
        <authorList>
            <person name="Dodson M.L."/>
            <person name="Schrock R.D. III"/>
            <person name="Lloyd R.S."/>
        </authorList>
    </citation>
    <scope>CATALYTIC ACTIVITY</scope>
    <scope>FUNCTION</scope>
</reference>
<reference key="9">
    <citation type="journal article" date="2004" name="J. Biol. Chem.">
        <title>Role of His-16 in turnover of T4 pyrimidine dimer glycosylase.</title>
        <authorList>
            <person name="Meador M.G."/>
            <person name="Rajagopalan L."/>
            <person name="Lloyd R.S."/>
            <person name="Dodson M.L."/>
        </authorList>
    </citation>
    <scope>MUTAGENESIS OF HIS-16</scope>
</reference>
<reference key="10">
    <citation type="journal article" date="1980" name="J. Biol. Chem.">
        <title>Comparison of the cleavage of pyrimidine dimers by the bacteriophage T4 and Micrococcus luteus UV-specific endonucleases.</title>
        <authorList>
            <person name="Gordon L.K."/>
            <person name="Haseltine W.A."/>
        </authorList>
    </citation>
    <scope>CATALYTIC ACTIVITY</scope>
    <scope>FUNCTION</scope>
</reference>
<reference key="11">
    <citation type="journal article" date="1992" name="Nucleic Acids Res.">
        <title>Participation of glutamic acid 23 of T4 endonuclease V in the beta-elimination reaction of an abasic site in a synthetic duplex DNA.</title>
        <authorList>
            <person name="Hori N."/>
            <person name="Doi T."/>
            <person name="Karaki Y."/>
            <person name="Kikuchi M."/>
            <person name="Ikehara M."/>
            <person name="Ohtsuka E."/>
        </authorList>
    </citation>
    <scope>MUTAGENESIS OF GLU-23</scope>
</reference>
<reference key="12">
    <citation type="journal article" date="1992" name="Science">
        <title>X-ray structure of T4 endonuclease V: an excision repair enzyme specific for a pyrimidine dimer.</title>
        <authorList>
            <person name="Morikawa K."/>
            <person name="Matsumoto O."/>
            <person name="Tsujimoto M."/>
            <person name="Katayanagi K."/>
            <person name="Ariyoshi M."/>
            <person name="Doi T."/>
            <person name="Ikehara M."/>
            <person name="Inaoka T."/>
            <person name="Ohtsuka E."/>
        </authorList>
    </citation>
    <scope>X-RAY CRYSTALLOGRAPHY (1.6 ANGSTROMS)</scope>
</reference>
<reference evidence="16" key="13">
    <citation type="journal article" date="1995" name="Cell">
        <title>Atomic model of a pyrimidine dimer excision repair enzyme complexed with a DNA substrate: structural basis for damaged DNA recognition.</title>
        <authorList>
            <person name="Vassylyev D.G."/>
            <person name="Kashiwagi T."/>
            <person name="Mikami Y."/>
            <person name="Ariyoshi M."/>
            <person name="Iwai S."/>
            <person name="Ohtsuka E."/>
            <person name="Morikawa K."/>
        </authorList>
    </citation>
    <scope>X-RAY CRYSTALLOGRAPHY (2.75 ANGSTROMS) OF 2-138 IN COMPLEX WITH DNA</scope>
    <scope>ACTIVE SITE</scope>
</reference>
<reference evidence="13 14 15 17" key="14">
    <citation type="journal article" date="1995" name="J. Mol. Biol.">
        <title>Crystal structure of a pyrimidine dimer-specific excision repair enzyme from bacteriophage T4: refinement at 1.45 A and X-ray analysis of the three active site mutants.</title>
        <authorList>
            <person name="Morikawa K."/>
            <person name="Ariyoshi M."/>
            <person name="Vassylyev D.G."/>
            <person name="Matsumoto O."/>
            <person name="Katayanagi K."/>
            <person name="Ohtsuka E."/>
        </authorList>
    </citation>
    <scope>X-RAY CRYSTALLOGRAPHY (1.45 ANGSTROMS)</scope>
</reference>
<reference evidence="18" key="15">
    <citation type="journal article" date="2006" name="J. Mol. Biol.">
        <title>Structure of T4 pyrimidine dimer glycosylase in a reduced imine covalent complex with abasic site-containing DNA.</title>
        <authorList>
            <person name="Golan G."/>
            <person name="Zharkov D.O."/>
            <person name="Grollman A.P."/>
            <person name="Dodson M.L."/>
            <person name="McCullough A.K."/>
            <person name="Lloyd R.S."/>
            <person name="Shoham G."/>
        </authorList>
    </citation>
    <scope>X-RAY CRYSTALLOGRAPHY (2.30 ANGSTROMS) OF 2-138 IN COMPLEX WITH ABASIC SITE-CONTAINING DNA</scope>
    <scope>FUNCTION</scope>
</reference>
<organism>
    <name type="scientific">Enterobacteria phage T4</name>
    <name type="common">Bacteriophage T4</name>
    <dbReference type="NCBI Taxonomy" id="10665"/>
    <lineage>
        <taxon>Viruses</taxon>
        <taxon>Duplodnaviria</taxon>
        <taxon>Heunggongvirae</taxon>
        <taxon>Uroviricota</taxon>
        <taxon>Caudoviricetes</taxon>
        <taxon>Straboviridae</taxon>
        <taxon>Tevenvirinae</taxon>
        <taxon>Tequatrovirus</taxon>
    </lineage>
</organism>
<organismHost>
    <name type="scientific">Escherichia coli</name>
    <dbReference type="NCBI Taxonomy" id="562"/>
</organismHost>
<feature type="chain" id="PRO_0000164934" description="Endonuclease V">
    <location>
        <begin position="1"/>
        <end position="138"/>
    </location>
</feature>
<feature type="active site" description="Nucleophile; via amide nitrogen" evidence="7 16">
    <location>
        <position position="2"/>
    </location>
</feature>
<feature type="active site" description="Proton acceptor" evidence="7 16">
    <location>
        <position position="23"/>
    </location>
</feature>
<feature type="site" description="Substrate binding" evidence="2 6">
    <location>
        <position position="3"/>
    </location>
</feature>
<feature type="site" description="Substrate binding" evidence="2">
    <location>
        <position position="22"/>
    </location>
</feature>
<feature type="site" description="Transition state stabilizer" evidence="16">
    <location>
        <position position="26"/>
    </location>
</feature>
<feature type="site" description="Substrate binding" evidence="2">
    <location>
        <position position="117"/>
    </location>
</feature>
<feature type="site" description="Substrate binding" evidence="2">
    <location>
        <position position="121"/>
    </location>
</feature>
<feature type="mutagenesis site" description="Complete loss of DNA glycosylase activity." evidence="9">
    <original>R</original>
    <variation>K</variation>
    <location>
        <position position="3"/>
    </location>
</feature>
<feature type="mutagenesis site" description="24% decrease in DNA glycosylase activity." evidence="2">
    <original>E</original>
    <variation>Q</variation>
    <location>
        <position position="11"/>
    </location>
</feature>
<feature type="mutagenesis site" description="30% decrease in enzymatic activity." evidence="3">
    <original>H</original>
    <variation>A</variation>
    <location>
        <position position="16"/>
    </location>
</feature>
<feature type="mutagenesis site" description="40% decrease in enzymatic activity." evidence="3">
    <original>H</original>
    <variation>C</variation>
    <location>
        <position position="16"/>
    </location>
</feature>
<feature type="mutagenesis site" description="60% decrease in enzymatic activity." evidence="3">
    <original>H</original>
    <variation>D</variation>
    <location>
        <position position="16"/>
    </location>
</feature>
<feature type="mutagenesis site" description="50% decrease in enzymatic activity." evidence="3">
    <original>H</original>
    <variation>E</variation>
    <location>
        <position position="16"/>
    </location>
</feature>
<feature type="mutagenesis site" description="75% decrease in enzymatic activity." evidence="3">
    <original>H</original>
    <variation>K</variation>
    <location>
        <position position="16"/>
    </location>
</feature>
<feature type="mutagenesis site" description="60% decrease in enzymatic activity." evidence="2">
    <original>H</original>
    <variation>Q</variation>
    <location>
        <position position="16"/>
    </location>
</feature>
<feature type="mutagenesis site" description="70% decrease in enzymatic activity." evidence="3">
    <original>H</original>
    <variation>S</variation>
    <location>
        <position position="16"/>
    </location>
</feature>
<feature type="mutagenesis site" description="No effect on DNA glycosylase activity." evidence="2">
    <original>Y</original>
    <variation>F</variation>
    <location>
        <position position="21"/>
    </location>
</feature>
<feature type="mutagenesis site" description="Almost complete loss of DNA glycosylase activity." evidence="2">
    <original>R</original>
    <variation>Q</variation>
    <location>
        <position position="22"/>
    </location>
</feature>
<feature type="mutagenesis site" description="Complete loss of DNA glycosylase activity. No effect on AP lyase activity." evidence="1 2">
    <original>E</original>
    <variation>D</variation>
    <location>
        <position position="23"/>
    </location>
</feature>
<feature type="mutagenesis site" description="Complete loss of DNA glycosylase activity. Complete loss of AP lyase activity." evidence="1 2">
    <original>E</original>
    <variation>Q</variation>
    <location>
        <position position="23"/>
    </location>
</feature>
<feature type="mutagenesis site" description="Almost complete loss of DNA glycosylase activity." evidence="2">
    <original>R</original>
    <variation>Q</variation>
    <location>
        <position position="26"/>
    </location>
</feature>
<feature type="mutagenesis site" description="10% decrease in DNA glycosylase activity." evidence="2">
    <original>R</original>
    <variation>Q</variation>
    <location>
        <position position="32"/>
    </location>
</feature>
<feature type="mutagenesis site" description="20% decrease in DNA glycosylase activity." evidence="2">
    <original>R</original>
    <variation>Q</variation>
    <location>
        <position position="40"/>
    </location>
</feature>
<feature type="mutagenesis site" description="25% decrease in DNA glycosylase activity." evidence="2">
    <original>R</original>
    <variation>Q</variation>
    <location>
        <position position="42"/>
    </location>
</feature>
<feature type="mutagenesis site" description="35% decrease in DNA glycosylase activity." evidence="2">
    <original>R</original>
    <variation>Q</variation>
    <location>
        <position position="68"/>
    </location>
</feature>
<feature type="mutagenesis site" description="No effect on DNA glycosylase activity." evidence="2">
    <original>K</original>
    <variation>Q</variation>
    <location>
        <position position="86"/>
    </location>
</feature>
<feature type="mutagenesis site" description="No effect on DNA glycosylase activity." evidence="2">
    <original>D</original>
    <variation>E</variation>
    <location>
        <position position="87"/>
    </location>
</feature>
<feature type="mutagenesis site" description="20% decrease in DNA glycosylase activity." evidence="2">
    <original>D</original>
    <variation>N</variation>
    <location>
        <position position="87"/>
    </location>
</feature>
<feature type="mutagenesis site" description="60% decrease in DNA glycosylase activity." evidence="2">
    <original>R</original>
    <variation>Q</variation>
    <location>
        <position position="117"/>
    </location>
</feature>
<feature type="mutagenesis site" description="5% decrease in DNA glycosylase activity." evidence="2">
    <original>D</original>
    <variation>N</variation>
    <location>
        <position position="119"/>
    </location>
</feature>
<feature type="mutagenesis site" description="10% decrease in DNA glycosylase activity." evidence="2">
    <original>E</original>
    <variation>Q</variation>
    <location>
        <position position="120"/>
    </location>
</feature>
<feature type="mutagenesis site" description="90% decrease in DNA glycosylase activity." evidence="2">
    <original>K</original>
    <variation>Q</variation>
    <location>
        <position position="121"/>
    </location>
</feature>
<feature type="mutagenesis site" description="10% decrease in DNA glycosylase activity." evidence="2">
    <original>R</original>
    <variation>Q</variation>
    <location>
        <position position="125"/>
    </location>
</feature>
<feature type="mutagenesis site" description="65% decrease in DNA glycosylase activity." evidence="2">
    <original>Y</original>
    <variation>F</variation>
    <location>
        <position position="129"/>
    </location>
</feature>
<feature type="mutagenesis site" description="10% decrease in DNA glycosylase activity." evidence="2">
    <original>Y</original>
    <variation>W</variation>
    <location>
        <position position="132"/>
    </location>
</feature>
<feature type="mutagenesis site" description="20% decrease in DNA glycosylase activity." evidence="2">
    <original>K</original>
    <variation>Q</variation>
    <location>
        <position position="134"/>
    </location>
</feature>
<feature type="helix" evidence="20">
    <location>
        <begin position="9"/>
        <end position="11"/>
    </location>
</feature>
<feature type="helix" evidence="20">
    <location>
        <begin position="14"/>
        <end position="23"/>
    </location>
</feature>
<feature type="helix" evidence="20">
    <location>
        <begin position="26"/>
        <end position="36"/>
    </location>
</feature>
<feature type="helix" evidence="20">
    <location>
        <begin position="41"/>
        <end position="43"/>
    </location>
</feature>
<feature type="turn" evidence="20">
    <location>
        <begin position="54"/>
        <end position="57"/>
    </location>
</feature>
<feature type="helix" evidence="20">
    <location>
        <begin position="58"/>
        <end position="60"/>
    </location>
</feature>
<feature type="helix" evidence="20">
    <location>
        <begin position="64"/>
        <end position="80"/>
    </location>
</feature>
<feature type="helix" evidence="20">
    <location>
        <begin position="98"/>
        <end position="100"/>
    </location>
</feature>
<feature type="helix" evidence="20">
    <location>
        <begin position="108"/>
        <end position="124"/>
    </location>
</feature>
<feature type="helix" evidence="20">
    <location>
        <begin position="126"/>
        <end position="128"/>
    </location>
</feature>
<feature type="strand" evidence="19">
    <location>
        <begin position="131"/>
        <end position="133"/>
    </location>
</feature>
<dbReference type="EC" id="3.2.2.17" evidence="5 7"/>
<dbReference type="EC" id="4.2.99.18" evidence="5 7"/>
<dbReference type="EMBL" id="X04567">
    <property type="protein sequence ID" value="CAA28215.1"/>
    <property type="molecule type" value="Genomic_DNA"/>
</dbReference>
<dbReference type="EMBL" id="AF158101">
    <property type="protein sequence ID" value="AAD42563.1"/>
    <property type="molecule type" value="Genomic_DNA"/>
</dbReference>
<dbReference type="EMBL" id="HM137666">
    <property type="protein sequence ID" value="ADJ39840.1"/>
    <property type="molecule type" value="Genomic_DNA"/>
</dbReference>
<dbReference type="EMBL" id="KJ477684">
    <property type="protein sequence ID" value="AHY83587.1"/>
    <property type="molecule type" value="Genomic_DNA"/>
</dbReference>
<dbReference type="EMBL" id="KJ477685">
    <property type="protein sequence ID" value="AHY83780.1"/>
    <property type="molecule type" value="Genomic_DNA"/>
</dbReference>
<dbReference type="EMBL" id="KJ477686">
    <property type="protein sequence ID" value="AHY83971.1"/>
    <property type="molecule type" value="Genomic_DNA"/>
</dbReference>
<dbReference type="PIR" id="A93540">
    <property type="entry name" value="NEBPT4"/>
</dbReference>
<dbReference type="RefSeq" id="NP_049733.1">
    <property type="nucleotide sequence ID" value="NC_000866.4"/>
</dbReference>
<dbReference type="PDB" id="1ENI">
    <property type="method" value="X-ray"/>
    <property type="resolution" value="2.20 A"/>
    <property type="chains" value="A=1-138"/>
</dbReference>
<dbReference type="PDB" id="1ENJ">
    <property type="method" value="X-ray"/>
    <property type="resolution" value="1.80 A"/>
    <property type="chains" value="A=1-138"/>
</dbReference>
<dbReference type="PDB" id="1ENK">
    <property type="method" value="X-ray"/>
    <property type="resolution" value="2.00 A"/>
    <property type="chains" value="A=1-138"/>
</dbReference>
<dbReference type="PDB" id="1VAS">
    <property type="method" value="X-ray"/>
    <property type="resolution" value="2.75 A"/>
    <property type="chains" value="A=2-138"/>
</dbReference>
<dbReference type="PDB" id="2END">
    <property type="method" value="X-ray"/>
    <property type="resolution" value="1.45 A"/>
    <property type="chains" value="A=1-138"/>
</dbReference>
<dbReference type="PDB" id="2FCC">
    <property type="method" value="X-ray"/>
    <property type="resolution" value="2.30 A"/>
    <property type="chains" value="A/B=2-138"/>
</dbReference>
<dbReference type="PDBsum" id="1ENI"/>
<dbReference type="PDBsum" id="1ENJ"/>
<dbReference type="PDBsum" id="1ENK"/>
<dbReference type="PDBsum" id="1VAS"/>
<dbReference type="PDBsum" id="2END"/>
<dbReference type="PDBsum" id="2FCC"/>
<dbReference type="BMRB" id="P04418"/>
<dbReference type="SMR" id="P04418"/>
<dbReference type="GeneID" id="1258606"/>
<dbReference type="KEGG" id="vg:1258606"/>
<dbReference type="OrthoDB" id="18384at10239"/>
<dbReference type="BRENDA" id="3.1.25.1">
    <property type="organism ID" value="732"/>
</dbReference>
<dbReference type="BRENDA" id="3.2.2.17">
    <property type="organism ID" value="732"/>
</dbReference>
<dbReference type="EvolutionaryTrace" id="P04418"/>
<dbReference type="Proteomes" id="UP000001092">
    <property type="component" value="Segment"/>
</dbReference>
<dbReference type="Proteomes" id="UP000009087">
    <property type="component" value="Segment"/>
</dbReference>
<dbReference type="Proteomes" id="UP000185269">
    <property type="component" value="Genome"/>
</dbReference>
<dbReference type="Proteomes" id="UP000185270">
    <property type="component" value="Genome"/>
</dbReference>
<dbReference type="Proteomes" id="UP000185271">
    <property type="component" value="Genome"/>
</dbReference>
<dbReference type="GO" id="GO:0140078">
    <property type="term" value="F:class I DNA-(apurinic or apyrimidinic site) endonuclease activity"/>
    <property type="evidence" value="ECO:0007669"/>
    <property type="project" value="UniProtKB-EC"/>
</dbReference>
<dbReference type="GO" id="GO:0033959">
    <property type="term" value="F:deoxyribodipyrimidine endonucleosidase activity"/>
    <property type="evidence" value="ECO:0007669"/>
    <property type="project" value="UniProtKB-EC"/>
</dbReference>
<dbReference type="GO" id="GO:0003906">
    <property type="term" value="F:DNA-(apurinic or apyrimidinic site) endonuclease activity"/>
    <property type="evidence" value="ECO:0000314"/>
    <property type="project" value="UniProtKB"/>
</dbReference>
<dbReference type="GO" id="GO:0004519">
    <property type="term" value="F:endonuclease activity"/>
    <property type="evidence" value="ECO:0007669"/>
    <property type="project" value="UniProtKB-KW"/>
</dbReference>
<dbReference type="GO" id="GO:0000704">
    <property type="term" value="F:pyrimidine dimer DNA N-glycosylase activity"/>
    <property type="evidence" value="ECO:0000314"/>
    <property type="project" value="UniProtKB"/>
</dbReference>
<dbReference type="GO" id="GO:0006281">
    <property type="term" value="P:DNA repair"/>
    <property type="evidence" value="ECO:0007669"/>
    <property type="project" value="UniProtKB-KW"/>
</dbReference>
<dbReference type="FunFam" id="1.10.440.10:FF:000001">
    <property type="entry name" value="Endonuclease V"/>
    <property type="match status" value="1"/>
</dbReference>
<dbReference type="Gene3D" id="1.10.440.10">
    <property type="entry name" value="T4 endonuclease V"/>
    <property type="match status" value="1"/>
</dbReference>
<dbReference type="InterPro" id="IPR004260">
    <property type="entry name" value="Pyr-dimer_DNA_glycosylase"/>
</dbReference>
<dbReference type="InterPro" id="IPR021143">
    <property type="entry name" value="Pyr-dimer_DNAGlyclase_EndonucV"/>
</dbReference>
<dbReference type="InterPro" id="IPR024796">
    <property type="entry name" value="T4_endonuc_V"/>
</dbReference>
<dbReference type="Pfam" id="PF03013">
    <property type="entry name" value="Pyr_excise"/>
    <property type="match status" value="1"/>
</dbReference>
<dbReference type="PIRSF" id="PIRSF500103">
    <property type="entry name" value="EndoV"/>
    <property type="match status" value="1"/>
</dbReference>
<dbReference type="PIRSF" id="PIRSF001000">
    <property type="entry name" value="PDG_ENDV"/>
    <property type="match status" value="1"/>
</dbReference>
<dbReference type="SUPFAM" id="SSF47077">
    <property type="entry name" value="T4 endonuclease V"/>
    <property type="match status" value="1"/>
</dbReference>
<accession>P04418</accession>
<accession>D9IEF4</accession>
<evidence type="ECO:0000269" key="1">
    <source>
    </source>
</evidence>
<evidence type="ECO:0000269" key="2">
    <source>
    </source>
</evidence>
<evidence type="ECO:0000269" key="3">
    <source>
    </source>
</evidence>
<evidence type="ECO:0000269" key="4">
    <source>
    </source>
</evidence>
<evidence type="ECO:0000269" key="5">
    <source>
    </source>
</evidence>
<evidence type="ECO:0000269" key="6">
    <source>
    </source>
</evidence>
<evidence type="ECO:0000269" key="7">
    <source>
    </source>
</evidence>
<evidence type="ECO:0000303" key="8">
    <source>
    </source>
</evidence>
<evidence type="ECO:0000305" key="9">
    <source>
    </source>
</evidence>
<evidence type="ECO:0000312" key="10">
    <source>
        <dbReference type="EMBL" id="AHY83587.1"/>
    </source>
</evidence>
<evidence type="ECO:0000312" key="11">
    <source>
        <dbReference type="EMBL" id="AHY83780.1"/>
    </source>
</evidence>
<evidence type="ECO:0000312" key="12">
    <source>
        <dbReference type="EMBL" id="AHY83971.1"/>
    </source>
</evidence>
<evidence type="ECO:0007744" key="13">
    <source>
        <dbReference type="PDB" id="1ENI"/>
    </source>
</evidence>
<evidence type="ECO:0007744" key="14">
    <source>
        <dbReference type="PDB" id="1ENJ"/>
    </source>
</evidence>
<evidence type="ECO:0007744" key="15">
    <source>
        <dbReference type="PDB" id="1ENK"/>
    </source>
</evidence>
<evidence type="ECO:0007744" key="16">
    <source>
        <dbReference type="PDB" id="1VAS"/>
    </source>
</evidence>
<evidence type="ECO:0007744" key="17">
    <source>
        <dbReference type="PDB" id="2END"/>
    </source>
</evidence>
<evidence type="ECO:0007744" key="18">
    <source>
        <dbReference type="PDB" id="2FCC"/>
    </source>
</evidence>
<evidence type="ECO:0007829" key="19">
    <source>
        <dbReference type="PDB" id="1ENJ"/>
    </source>
</evidence>
<evidence type="ECO:0007829" key="20">
    <source>
        <dbReference type="PDB" id="2END"/>
    </source>
</evidence>
<comment type="function">
    <text evidence="4 5 7">Participates in the repair of UV-damaged DNA by excising pyrimidine dimers that are the major UV-lesions (PubMed:6254991). DNA glycosylase activity hydrolyzes the glycosylic bond of the 5' pyrimidine of the dimer (PubMed:6254991). This leaves apurinic/apyrimidic (AP) sites in the DNA. These AP sites are removed by the AP lyase activity which cleaves the intrapyrimidine phosphodiester bond (PubMed:6254991). Catalysis proceeds via a protonated imine covalent intermediate between the alpha-amino group of the N-terminal threonine residue and the C1' of the deoxyribose sugar of the 5' pyrimidine at the dimer site (PubMed:16916523, PubMed:8347626).</text>
</comment>
<comment type="catalytic activity">
    <reaction evidence="5 7">
        <text>Cleaves the N-glycosidic bond between the 5'-pyrimidine residue in cyclobutadipyrimidine (in DNA) and the corresponding deoxy-D-ribose residue.</text>
        <dbReference type="EC" id="3.2.2.17"/>
    </reaction>
</comment>
<comment type="catalytic activity">
    <reaction evidence="5 7">
        <text>2'-deoxyribonucleotide-(2'-deoxyribose 5'-phosphate)-2'-deoxyribonucleotide-DNA = a 3'-end 2'-deoxyribonucleotide-(2,3-dehydro-2,3-deoxyribose 5'-phosphate)-DNA + a 5'-end 5'-phospho-2'-deoxyribonucleoside-DNA + H(+)</text>
        <dbReference type="Rhea" id="RHEA:66592"/>
        <dbReference type="Rhea" id="RHEA-COMP:13180"/>
        <dbReference type="Rhea" id="RHEA-COMP:16897"/>
        <dbReference type="Rhea" id="RHEA-COMP:17067"/>
        <dbReference type="ChEBI" id="CHEBI:15378"/>
        <dbReference type="ChEBI" id="CHEBI:136412"/>
        <dbReference type="ChEBI" id="CHEBI:157695"/>
        <dbReference type="ChEBI" id="CHEBI:167181"/>
        <dbReference type="EC" id="4.2.99.18"/>
    </reaction>
</comment>
<comment type="subunit">
    <text>Monomer.</text>
</comment>
<comment type="miscellaneous">
    <text>Phage T4 deficient in the enzymes are extremely sensitive to UV.</text>
</comment>